<sequence length="622" mass="67274">MQTSKSSLAALTLGAIGVVYGDIGTSVLYAVKEVFGSGHVPFTHANVYGVLSVLFWTLTVIVSLKYVVLVLRADNHGEGGLIAMLALASQAVKDRPRLRGWLLGLGIFGTSLFYGDGVITPAISVLSAIEGLEVVSPHFGKAVIPLTLVVLFGLFAVQKRGTAGVGRYFGPVTLVWFFTIAALGVPHIVGHPEILGALSPHHALGFILGNPGISFIILGAVVLCVTGAEALYADLGHFGKRPIRLAWFSVAMPALTINYFGQGALLLAEPSAVKNPFYMMAPDWALVPLVVLATMATVIASQALITGAFSVTKQVIQLGYLPRLNIQHTSVRETGQIYLPFVNWSLFVAIVLAVVMFRNSSNLAAAYGIAVTLDMLITTVLTFFVIRYGWGYPLALCVATTGFFFVVDLAFFSSNLLKLLQGGWFPLMIGGLVFTLMMTWKRGRELLNDKLREDSIGLQDFLASVQANPPMRVDGTAVFLSAEAGVVPNALLHNLKHNKVLHRQNLFVTVRYHETPWIGLDQRLQVAPLGGDCWQVTVNYGFKNELDLPSALRLMHGRGCELETMSTSYFLSRDVVVPTIGSGMAPWREKLFAQMHHNASGVAAFLHLPSNAVVELGSKVEI</sequence>
<accession>B9MH59</accession>
<name>KUP_ACIET</name>
<evidence type="ECO:0000255" key="1">
    <source>
        <dbReference type="HAMAP-Rule" id="MF_01522"/>
    </source>
</evidence>
<dbReference type="EMBL" id="CP001392">
    <property type="protein sequence ID" value="ACM34687.1"/>
    <property type="molecule type" value="Genomic_DNA"/>
</dbReference>
<dbReference type="RefSeq" id="WP_011806995.1">
    <property type="nucleotide sequence ID" value="NC_011992.1"/>
</dbReference>
<dbReference type="KEGG" id="dia:Dtpsy_3258"/>
<dbReference type="eggNOG" id="COG3158">
    <property type="taxonomic scope" value="Bacteria"/>
</dbReference>
<dbReference type="HOGENOM" id="CLU_008142_4_2_4"/>
<dbReference type="Proteomes" id="UP000000450">
    <property type="component" value="Chromosome"/>
</dbReference>
<dbReference type="GO" id="GO:0005886">
    <property type="term" value="C:plasma membrane"/>
    <property type="evidence" value="ECO:0007669"/>
    <property type="project" value="UniProtKB-SubCell"/>
</dbReference>
<dbReference type="GO" id="GO:0015079">
    <property type="term" value="F:potassium ion transmembrane transporter activity"/>
    <property type="evidence" value="ECO:0007669"/>
    <property type="project" value="UniProtKB-UniRule"/>
</dbReference>
<dbReference type="GO" id="GO:0015293">
    <property type="term" value="F:symporter activity"/>
    <property type="evidence" value="ECO:0007669"/>
    <property type="project" value="UniProtKB-UniRule"/>
</dbReference>
<dbReference type="HAMAP" id="MF_01522">
    <property type="entry name" value="Kup"/>
    <property type="match status" value="1"/>
</dbReference>
<dbReference type="InterPro" id="IPR003855">
    <property type="entry name" value="K+_transporter"/>
</dbReference>
<dbReference type="InterPro" id="IPR053952">
    <property type="entry name" value="K_trans_C"/>
</dbReference>
<dbReference type="InterPro" id="IPR053951">
    <property type="entry name" value="K_trans_N"/>
</dbReference>
<dbReference type="InterPro" id="IPR023051">
    <property type="entry name" value="Kup"/>
</dbReference>
<dbReference type="PANTHER" id="PTHR30540:SF79">
    <property type="entry name" value="LOW AFFINITY POTASSIUM TRANSPORT SYSTEM PROTEIN KUP"/>
    <property type="match status" value="1"/>
</dbReference>
<dbReference type="PANTHER" id="PTHR30540">
    <property type="entry name" value="OSMOTIC STRESS POTASSIUM TRANSPORTER"/>
    <property type="match status" value="1"/>
</dbReference>
<dbReference type="Pfam" id="PF02705">
    <property type="entry name" value="K_trans"/>
    <property type="match status" value="1"/>
</dbReference>
<dbReference type="Pfam" id="PF22776">
    <property type="entry name" value="K_trans_C"/>
    <property type="match status" value="1"/>
</dbReference>
<gene>
    <name evidence="1" type="primary">kup</name>
    <name type="ordered locus">Dtpsy_3258</name>
</gene>
<protein>
    <recommendedName>
        <fullName evidence="1">Probable potassium transport system protein Kup</fullName>
    </recommendedName>
</protein>
<proteinExistence type="inferred from homology"/>
<feature type="chain" id="PRO_1000185115" description="Probable potassium transport system protein Kup">
    <location>
        <begin position="1"/>
        <end position="622"/>
    </location>
</feature>
<feature type="transmembrane region" description="Helical" evidence="1">
    <location>
        <begin position="8"/>
        <end position="28"/>
    </location>
</feature>
<feature type="transmembrane region" description="Helical" evidence="1">
    <location>
        <begin position="50"/>
        <end position="70"/>
    </location>
</feature>
<feature type="transmembrane region" description="Helical" evidence="1">
    <location>
        <begin position="100"/>
        <end position="120"/>
    </location>
</feature>
<feature type="transmembrane region" description="Helical" evidence="1">
    <location>
        <begin position="137"/>
        <end position="157"/>
    </location>
</feature>
<feature type="transmembrane region" description="Helical" evidence="1">
    <location>
        <begin position="169"/>
        <end position="189"/>
    </location>
</feature>
<feature type="transmembrane region" description="Helical" evidence="1">
    <location>
        <begin position="203"/>
        <end position="223"/>
    </location>
</feature>
<feature type="transmembrane region" description="Helical" evidence="1">
    <location>
        <begin position="247"/>
        <end position="267"/>
    </location>
</feature>
<feature type="transmembrane region" description="Helical" evidence="1">
    <location>
        <begin position="285"/>
        <end position="305"/>
    </location>
</feature>
<feature type="transmembrane region" description="Helical" evidence="1">
    <location>
        <begin position="337"/>
        <end position="357"/>
    </location>
</feature>
<feature type="transmembrane region" description="Helical" evidence="1">
    <location>
        <begin position="366"/>
        <end position="386"/>
    </location>
</feature>
<feature type="transmembrane region" description="Helical" evidence="1">
    <location>
        <begin position="392"/>
        <end position="412"/>
    </location>
</feature>
<feature type="transmembrane region" description="Helical" evidence="1">
    <location>
        <begin position="419"/>
        <end position="439"/>
    </location>
</feature>
<reference key="1">
    <citation type="submission" date="2009-01" db="EMBL/GenBank/DDBJ databases">
        <title>Complete sequence of Diaphorobacter sp. TPSY.</title>
        <authorList>
            <consortium name="US DOE Joint Genome Institute"/>
            <person name="Lucas S."/>
            <person name="Copeland A."/>
            <person name="Lapidus A."/>
            <person name="Glavina del Rio T."/>
            <person name="Tice H."/>
            <person name="Bruce D."/>
            <person name="Goodwin L."/>
            <person name="Pitluck S."/>
            <person name="Chertkov O."/>
            <person name="Brettin T."/>
            <person name="Detter J.C."/>
            <person name="Han C."/>
            <person name="Larimer F."/>
            <person name="Land M."/>
            <person name="Hauser L."/>
            <person name="Kyrpides N."/>
            <person name="Mikhailova N."/>
            <person name="Coates J.D."/>
        </authorList>
    </citation>
    <scope>NUCLEOTIDE SEQUENCE [LARGE SCALE GENOMIC DNA]</scope>
    <source>
        <strain>TPSY</strain>
    </source>
</reference>
<keyword id="KW-0997">Cell inner membrane</keyword>
<keyword id="KW-1003">Cell membrane</keyword>
<keyword id="KW-0406">Ion transport</keyword>
<keyword id="KW-0472">Membrane</keyword>
<keyword id="KW-0630">Potassium</keyword>
<keyword id="KW-0633">Potassium transport</keyword>
<keyword id="KW-1185">Reference proteome</keyword>
<keyword id="KW-0769">Symport</keyword>
<keyword id="KW-0812">Transmembrane</keyword>
<keyword id="KW-1133">Transmembrane helix</keyword>
<keyword id="KW-0813">Transport</keyword>
<comment type="function">
    <text evidence="1">Transport of potassium into the cell. Likely operates as a K(+):H(+) symporter.</text>
</comment>
<comment type="catalytic activity">
    <reaction evidence="1">
        <text>K(+)(in) + H(+)(in) = K(+)(out) + H(+)(out)</text>
        <dbReference type="Rhea" id="RHEA:28490"/>
        <dbReference type="ChEBI" id="CHEBI:15378"/>
        <dbReference type="ChEBI" id="CHEBI:29103"/>
    </reaction>
    <physiologicalReaction direction="right-to-left" evidence="1">
        <dbReference type="Rhea" id="RHEA:28492"/>
    </physiologicalReaction>
</comment>
<comment type="subcellular location">
    <subcellularLocation>
        <location evidence="1">Cell inner membrane</location>
        <topology evidence="1">Multi-pass membrane protein</topology>
    </subcellularLocation>
</comment>
<comment type="similarity">
    <text evidence="1">Belongs to the HAK/KUP transporter (TC 2.A.72) family.</text>
</comment>
<organism>
    <name type="scientific">Acidovorax ebreus (strain TPSY)</name>
    <name type="common">Diaphorobacter sp. (strain TPSY)</name>
    <dbReference type="NCBI Taxonomy" id="535289"/>
    <lineage>
        <taxon>Bacteria</taxon>
        <taxon>Pseudomonadati</taxon>
        <taxon>Pseudomonadota</taxon>
        <taxon>Betaproteobacteria</taxon>
        <taxon>Burkholderiales</taxon>
        <taxon>Comamonadaceae</taxon>
        <taxon>Diaphorobacter</taxon>
    </lineage>
</organism>